<organism>
    <name type="scientific">Streptococcus pneumoniae serotype 2 (strain D39 / NCTC 7466)</name>
    <dbReference type="NCBI Taxonomy" id="373153"/>
    <lineage>
        <taxon>Bacteria</taxon>
        <taxon>Bacillati</taxon>
        <taxon>Bacillota</taxon>
        <taxon>Bacilli</taxon>
        <taxon>Lactobacillales</taxon>
        <taxon>Streptococcaceae</taxon>
        <taxon>Streptococcus</taxon>
    </lineage>
</organism>
<protein>
    <recommendedName>
        <fullName evidence="1">Large ribosomal subunit protein bL20</fullName>
    </recommendedName>
    <alternativeName>
        <fullName evidence="2">50S ribosomal protein L20</fullName>
    </alternativeName>
</protein>
<evidence type="ECO:0000255" key="1">
    <source>
        <dbReference type="HAMAP-Rule" id="MF_00382"/>
    </source>
</evidence>
<evidence type="ECO:0000305" key="2"/>
<feature type="chain" id="PRO_1000049082" description="Large ribosomal subunit protein bL20">
    <location>
        <begin position="1"/>
        <end position="119"/>
    </location>
</feature>
<name>RL20_STRP2</name>
<keyword id="KW-1185">Reference proteome</keyword>
<keyword id="KW-0687">Ribonucleoprotein</keyword>
<keyword id="KW-0689">Ribosomal protein</keyword>
<keyword id="KW-0694">RNA-binding</keyword>
<keyword id="KW-0699">rRNA-binding</keyword>
<accession>Q04KW7</accession>
<gene>
    <name evidence="1" type="primary">rplT</name>
    <name type="ordered locus">SPD_0849</name>
</gene>
<sequence length="119" mass="13693">MARVKGGVVSRKRRKRILKLAKGYYGAKHILFRTAKEQVMNSYYYAYRDRRQKKRDFRKLWITRINAAARMNGLSYSQLMHGLKLAEIEVNRKMLADLAVNDAVAFTALADAAKAKLGK</sequence>
<proteinExistence type="inferred from homology"/>
<comment type="function">
    <text evidence="1">Binds directly to 23S ribosomal RNA and is necessary for the in vitro assembly process of the 50S ribosomal subunit. It is not involved in the protein synthesizing functions of that subunit.</text>
</comment>
<comment type="similarity">
    <text evidence="1">Belongs to the bacterial ribosomal protein bL20 family.</text>
</comment>
<reference key="1">
    <citation type="journal article" date="2007" name="J. Bacteriol.">
        <title>Genome sequence of Avery's virulent serotype 2 strain D39 of Streptococcus pneumoniae and comparison with that of unencapsulated laboratory strain R6.</title>
        <authorList>
            <person name="Lanie J.A."/>
            <person name="Ng W.-L."/>
            <person name="Kazmierczak K.M."/>
            <person name="Andrzejewski T.M."/>
            <person name="Davidsen T.M."/>
            <person name="Wayne K.J."/>
            <person name="Tettelin H."/>
            <person name="Glass J.I."/>
            <person name="Winkler M.E."/>
        </authorList>
    </citation>
    <scope>NUCLEOTIDE SEQUENCE [LARGE SCALE GENOMIC DNA]</scope>
    <source>
        <strain>D39 / NCTC 7466</strain>
    </source>
</reference>
<dbReference type="EMBL" id="CP000410">
    <property type="protein sequence ID" value="ABJ54841.1"/>
    <property type="molecule type" value="Genomic_DNA"/>
</dbReference>
<dbReference type="RefSeq" id="WP_000124836.1">
    <property type="nucleotide sequence ID" value="NZ_JAMLJR010000004.1"/>
</dbReference>
<dbReference type="SMR" id="Q04KW7"/>
<dbReference type="PaxDb" id="373153-SPD_0849"/>
<dbReference type="GeneID" id="45653697"/>
<dbReference type="KEGG" id="spd:SPD_0849"/>
<dbReference type="eggNOG" id="COG0292">
    <property type="taxonomic scope" value="Bacteria"/>
</dbReference>
<dbReference type="HOGENOM" id="CLU_123265_0_1_9"/>
<dbReference type="BioCyc" id="SPNE373153:G1G6V-932-MONOMER"/>
<dbReference type="Proteomes" id="UP000001452">
    <property type="component" value="Chromosome"/>
</dbReference>
<dbReference type="GO" id="GO:1990904">
    <property type="term" value="C:ribonucleoprotein complex"/>
    <property type="evidence" value="ECO:0007669"/>
    <property type="project" value="UniProtKB-KW"/>
</dbReference>
<dbReference type="GO" id="GO:0005840">
    <property type="term" value="C:ribosome"/>
    <property type="evidence" value="ECO:0007669"/>
    <property type="project" value="UniProtKB-KW"/>
</dbReference>
<dbReference type="GO" id="GO:0019843">
    <property type="term" value="F:rRNA binding"/>
    <property type="evidence" value="ECO:0007669"/>
    <property type="project" value="UniProtKB-UniRule"/>
</dbReference>
<dbReference type="GO" id="GO:0003735">
    <property type="term" value="F:structural constituent of ribosome"/>
    <property type="evidence" value="ECO:0007669"/>
    <property type="project" value="InterPro"/>
</dbReference>
<dbReference type="GO" id="GO:0000027">
    <property type="term" value="P:ribosomal large subunit assembly"/>
    <property type="evidence" value="ECO:0007669"/>
    <property type="project" value="UniProtKB-UniRule"/>
</dbReference>
<dbReference type="GO" id="GO:0006412">
    <property type="term" value="P:translation"/>
    <property type="evidence" value="ECO:0007669"/>
    <property type="project" value="InterPro"/>
</dbReference>
<dbReference type="CDD" id="cd07026">
    <property type="entry name" value="Ribosomal_L20"/>
    <property type="match status" value="1"/>
</dbReference>
<dbReference type="FunFam" id="1.10.1900.20:FF:000001">
    <property type="entry name" value="50S ribosomal protein L20"/>
    <property type="match status" value="1"/>
</dbReference>
<dbReference type="Gene3D" id="6.10.160.10">
    <property type="match status" value="1"/>
</dbReference>
<dbReference type="Gene3D" id="1.10.1900.20">
    <property type="entry name" value="Ribosomal protein L20"/>
    <property type="match status" value="1"/>
</dbReference>
<dbReference type="HAMAP" id="MF_00382">
    <property type="entry name" value="Ribosomal_bL20"/>
    <property type="match status" value="1"/>
</dbReference>
<dbReference type="InterPro" id="IPR005813">
    <property type="entry name" value="Ribosomal_bL20"/>
</dbReference>
<dbReference type="InterPro" id="IPR049946">
    <property type="entry name" value="RIBOSOMAL_L20_CS"/>
</dbReference>
<dbReference type="InterPro" id="IPR035566">
    <property type="entry name" value="Ribosomal_protein_bL20_C"/>
</dbReference>
<dbReference type="NCBIfam" id="TIGR01032">
    <property type="entry name" value="rplT_bact"/>
    <property type="match status" value="1"/>
</dbReference>
<dbReference type="PANTHER" id="PTHR10986">
    <property type="entry name" value="39S RIBOSOMAL PROTEIN L20"/>
    <property type="match status" value="1"/>
</dbReference>
<dbReference type="Pfam" id="PF00453">
    <property type="entry name" value="Ribosomal_L20"/>
    <property type="match status" value="1"/>
</dbReference>
<dbReference type="PRINTS" id="PR00062">
    <property type="entry name" value="RIBOSOMALL20"/>
</dbReference>
<dbReference type="SUPFAM" id="SSF74731">
    <property type="entry name" value="Ribosomal protein L20"/>
    <property type="match status" value="1"/>
</dbReference>
<dbReference type="PROSITE" id="PS00937">
    <property type="entry name" value="RIBOSOMAL_L20"/>
    <property type="match status" value="1"/>
</dbReference>